<proteinExistence type="evidence at protein level"/>
<name>MLE_TODPA</name>
<evidence type="ECO:0000255" key="1">
    <source>
        <dbReference type="PROSITE-ProRule" id="PRU00448"/>
    </source>
</evidence>
<evidence type="ECO:0000305" key="2"/>
<evidence type="ECO:0007829" key="3">
    <source>
        <dbReference type="PDB" id="3I5G"/>
    </source>
</evidence>
<evidence type="ECO:0007829" key="4">
    <source>
        <dbReference type="PDB" id="3I5I"/>
    </source>
</evidence>
<feature type="chain" id="PRO_0000198724" description="Myosin catalytic light chain LC-1, mantle muscle">
    <location>
        <begin position="1"/>
        <end position="160"/>
    </location>
</feature>
<feature type="domain" description="EF-hand 1" evidence="1">
    <location>
        <begin position="7"/>
        <end position="44"/>
    </location>
</feature>
<feature type="domain" description="EF-hand 2" evidence="1">
    <location>
        <begin position="83"/>
        <end position="118"/>
    </location>
</feature>
<feature type="domain" description="EF-hand 3" evidence="2">
    <location>
        <begin position="119"/>
        <end position="153"/>
    </location>
</feature>
<feature type="modified residue" description="Blocked amino end (Xaa)">
    <location>
        <position position="1"/>
    </location>
</feature>
<feature type="helix" evidence="3">
    <location>
        <begin position="6"/>
        <end position="22"/>
    </location>
</feature>
<feature type="strand" evidence="3">
    <location>
        <begin position="25"/>
        <end position="27"/>
    </location>
</feature>
<feature type="helix" evidence="3">
    <location>
        <begin position="31"/>
        <end position="33"/>
    </location>
</feature>
<feature type="helix" evidence="3">
    <location>
        <begin position="34"/>
        <end position="40"/>
    </location>
</feature>
<feature type="helix" evidence="3">
    <location>
        <begin position="47"/>
        <end position="51"/>
    </location>
</feature>
<feature type="turn" evidence="3">
    <location>
        <begin position="52"/>
        <end position="54"/>
    </location>
</feature>
<feature type="strand" evidence="4">
    <location>
        <begin position="57"/>
        <end position="61"/>
    </location>
</feature>
<feature type="helix" evidence="3">
    <location>
        <begin position="66"/>
        <end position="76"/>
    </location>
</feature>
<feature type="helix" evidence="3">
    <location>
        <begin position="85"/>
        <end position="95"/>
    </location>
</feature>
<feature type="strand" evidence="3">
    <location>
        <begin position="99"/>
        <end position="103"/>
    </location>
</feature>
<feature type="helix" evidence="3">
    <location>
        <begin position="105"/>
        <end position="114"/>
    </location>
</feature>
<feature type="strand" evidence="3">
    <location>
        <begin position="115"/>
        <end position="117"/>
    </location>
</feature>
<feature type="helix" evidence="3">
    <location>
        <begin position="121"/>
        <end position="130"/>
    </location>
</feature>
<feature type="strand" evidence="4">
    <location>
        <begin position="139"/>
        <end position="142"/>
    </location>
</feature>
<feature type="helix" evidence="3">
    <location>
        <begin position="143"/>
        <end position="152"/>
    </location>
</feature>
<dbReference type="PIR" id="A25571">
    <property type="entry name" value="A25571"/>
</dbReference>
<dbReference type="PDB" id="3I5F">
    <property type="method" value="X-ray"/>
    <property type="resolution" value="3.10 A"/>
    <property type="chains" value="C=2-160"/>
</dbReference>
<dbReference type="PDB" id="3I5G">
    <property type="method" value="X-ray"/>
    <property type="resolution" value="2.60 A"/>
    <property type="chains" value="C=2-160"/>
</dbReference>
<dbReference type="PDB" id="3I5H">
    <property type="method" value="X-ray"/>
    <property type="resolution" value="3.40 A"/>
    <property type="chains" value="C=2-160"/>
</dbReference>
<dbReference type="PDB" id="3I5I">
    <property type="method" value="X-ray"/>
    <property type="resolution" value="3.30 A"/>
    <property type="chains" value="C=2-160"/>
</dbReference>
<dbReference type="PDBsum" id="3I5F"/>
<dbReference type="PDBsum" id="3I5G"/>
<dbReference type="PDBsum" id="3I5H"/>
<dbReference type="PDBsum" id="3I5I"/>
<dbReference type="SMR" id="P05945"/>
<dbReference type="EvolutionaryTrace" id="P05945"/>
<dbReference type="GO" id="GO:0005859">
    <property type="term" value="C:muscle myosin complex"/>
    <property type="evidence" value="ECO:0007669"/>
    <property type="project" value="TreeGrafter"/>
</dbReference>
<dbReference type="GO" id="GO:0005509">
    <property type="term" value="F:calcium ion binding"/>
    <property type="evidence" value="ECO:0007669"/>
    <property type="project" value="InterPro"/>
</dbReference>
<dbReference type="CDD" id="cd00051">
    <property type="entry name" value="EFh"/>
    <property type="match status" value="1"/>
</dbReference>
<dbReference type="FunFam" id="1.10.238.10:FF:000001">
    <property type="entry name" value="Calmodulin 1"/>
    <property type="match status" value="1"/>
</dbReference>
<dbReference type="Gene3D" id="1.10.238.10">
    <property type="entry name" value="EF-hand"/>
    <property type="match status" value="2"/>
</dbReference>
<dbReference type="InterPro" id="IPR050230">
    <property type="entry name" value="CALM/Myosin/TropC-like"/>
</dbReference>
<dbReference type="InterPro" id="IPR011992">
    <property type="entry name" value="EF-hand-dom_pair"/>
</dbReference>
<dbReference type="InterPro" id="IPR002048">
    <property type="entry name" value="EF_hand_dom"/>
</dbReference>
<dbReference type="PANTHER" id="PTHR23048">
    <property type="entry name" value="MYOSIN LIGHT CHAIN 1, 3"/>
    <property type="match status" value="1"/>
</dbReference>
<dbReference type="PANTHER" id="PTHR23048:SF33">
    <property type="entry name" value="MYOSIN LIGHT CHAIN ALKALI"/>
    <property type="match status" value="1"/>
</dbReference>
<dbReference type="Pfam" id="PF13405">
    <property type="entry name" value="EF-hand_6"/>
    <property type="match status" value="1"/>
</dbReference>
<dbReference type="SMART" id="SM00054">
    <property type="entry name" value="EFh"/>
    <property type="match status" value="1"/>
</dbReference>
<dbReference type="SUPFAM" id="SSF47473">
    <property type="entry name" value="EF-hand"/>
    <property type="match status" value="1"/>
</dbReference>
<dbReference type="PROSITE" id="PS50222">
    <property type="entry name" value="EF_HAND_2"/>
    <property type="match status" value="2"/>
</dbReference>
<protein>
    <recommendedName>
        <fullName>Myosin catalytic light chain LC-1, mantle muscle</fullName>
    </recommendedName>
</protein>
<organism>
    <name type="scientific">Todarodes pacificus</name>
    <name type="common">Japanese flying squid</name>
    <name type="synonym">Ommastrephes pacificus</name>
    <dbReference type="NCBI Taxonomy" id="6637"/>
    <lineage>
        <taxon>Eukaryota</taxon>
        <taxon>Metazoa</taxon>
        <taxon>Spiralia</taxon>
        <taxon>Lophotrochozoa</taxon>
        <taxon>Mollusca</taxon>
        <taxon>Cephalopoda</taxon>
        <taxon>Coleoidea</taxon>
        <taxon>Decapodiformes</taxon>
        <taxon>Oegopsida</taxon>
        <taxon>Ommastrephidae</taxon>
        <taxon>Todarodes</taxon>
    </lineage>
</organism>
<sequence length="160" mass="18171">XSQLTKDEIEEVREVFDLFDFWDGRDGDVDAAKVGDLLRCLGMNPTEAQVHQHGGTKKMGEKAYKLEEILPIYEEMSSKDTGTAADEFMEAFKTFDREGQGLISSAEIRNVLKMLGERITEDQCNDIFTFCDIREDIDGNIKYEDLMKKVMAGPFPDKSD</sequence>
<keyword id="KW-0002">3D-structure</keyword>
<keyword id="KW-0903">Direct protein sequencing</keyword>
<keyword id="KW-0505">Motor protein</keyword>
<keyword id="KW-0514">Muscle protein</keyword>
<keyword id="KW-0518">Myosin</keyword>
<keyword id="KW-0677">Repeat</keyword>
<comment type="function">
    <text>In molluscan muscle, calcium regulation is associated with myosin rather than with actin. Muscle myosin contains two types of light chains: the catalytic light chain, essential for ATPase activity, and the regulatory light chain, a calcium-binding protein responsible for Ca(2+) dependent binding and Ca(2+) dependent Mg-ATPase activity.</text>
</comment>
<reference key="1">
    <citation type="journal article" date="1986" name="Biol. Chem. Hoppe-Seyler">
        <title>Amino-acid sequence of LC-1 light chain of squid mantle muscle myosin.</title>
        <authorList>
            <person name="Watanabe B."/>
            <person name="Maita T."/>
            <person name="Konno K."/>
            <person name="Matsuda G."/>
        </authorList>
    </citation>
    <scope>PROTEIN SEQUENCE</scope>
</reference>
<accession>P05945</accession>